<organism>
    <name type="scientific">Burkholderia cenocepacia (strain ATCC BAA-245 / DSM 16553 / LMG 16656 / NCTC 13227 / J2315 / CF5610)</name>
    <name type="common">Burkholderia cepacia (strain J2315)</name>
    <dbReference type="NCBI Taxonomy" id="216591"/>
    <lineage>
        <taxon>Bacteria</taxon>
        <taxon>Pseudomonadati</taxon>
        <taxon>Pseudomonadota</taxon>
        <taxon>Betaproteobacteria</taxon>
        <taxon>Burkholderiales</taxon>
        <taxon>Burkholderiaceae</taxon>
        <taxon>Burkholderia</taxon>
        <taxon>Burkholderia cepacia complex</taxon>
    </lineage>
</organism>
<evidence type="ECO:0000255" key="1">
    <source>
        <dbReference type="HAMAP-Rule" id="MF_00123"/>
    </source>
</evidence>
<comment type="catalytic activity">
    <reaction evidence="1">
        <text>tRNA(Arg) + L-arginine + ATP = L-arginyl-tRNA(Arg) + AMP + diphosphate</text>
        <dbReference type="Rhea" id="RHEA:20301"/>
        <dbReference type="Rhea" id="RHEA-COMP:9658"/>
        <dbReference type="Rhea" id="RHEA-COMP:9673"/>
        <dbReference type="ChEBI" id="CHEBI:30616"/>
        <dbReference type="ChEBI" id="CHEBI:32682"/>
        <dbReference type="ChEBI" id="CHEBI:33019"/>
        <dbReference type="ChEBI" id="CHEBI:78442"/>
        <dbReference type="ChEBI" id="CHEBI:78513"/>
        <dbReference type="ChEBI" id="CHEBI:456215"/>
        <dbReference type="EC" id="6.1.1.19"/>
    </reaction>
</comment>
<comment type="subunit">
    <text evidence="1">Monomer.</text>
</comment>
<comment type="subcellular location">
    <subcellularLocation>
        <location evidence="1">Cytoplasm</location>
    </subcellularLocation>
</comment>
<comment type="similarity">
    <text evidence="1">Belongs to the class-I aminoacyl-tRNA synthetase family.</text>
</comment>
<keyword id="KW-0030">Aminoacyl-tRNA synthetase</keyword>
<keyword id="KW-0067">ATP-binding</keyword>
<keyword id="KW-0963">Cytoplasm</keyword>
<keyword id="KW-0436">Ligase</keyword>
<keyword id="KW-0547">Nucleotide-binding</keyword>
<keyword id="KW-0648">Protein biosynthesis</keyword>
<accession>B4E9M9</accession>
<name>SYR_BURCJ</name>
<protein>
    <recommendedName>
        <fullName evidence="1">Arginine--tRNA ligase</fullName>
        <ecNumber evidence="1">6.1.1.19</ecNumber>
    </recommendedName>
    <alternativeName>
        <fullName evidence="1">Arginyl-tRNA synthetase</fullName>
        <shortName evidence="1">ArgRS</shortName>
    </alternativeName>
</protein>
<feature type="chain" id="PRO_1000095342" description="Arginine--tRNA ligase">
    <location>
        <begin position="1"/>
        <end position="593"/>
    </location>
</feature>
<feature type="short sequence motif" description="'HIGH' region">
    <location>
        <begin position="138"/>
        <end position="148"/>
    </location>
</feature>
<reference key="1">
    <citation type="journal article" date="2009" name="J. Bacteriol.">
        <title>The genome of Burkholderia cenocepacia J2315, an epidemic pathogen of cystic fibrosis patients.</title>
        <authorList>
            <person name="Holden M.T."/>
            <person name="Seth-Smith H.M."/>
            <person name="Crossman L.C."/>
            <person name="Sebaihia M."/>
            <person name="Bentley S.D."/>
            <person name="Cerdeno-Tarraga A.M."/>
            <person name="Thomson N.R."/>
            <person name="Bason N."/>
            <person name="Quail M.A."/>
            <person name="Sharp S."/>
            <person name="Cherevach I."/>
            <person name="Churcher C."/>
            <person name="Goodhead I."/>
            <person name="Hauser H."/>
            <person name="Holroyd N."/>
            <person name="Mungall K."/>
            <person name="Scott P."/>
            <person name="Walker D."/>
            <person name="White B."/>
            <person name="Rose H."/>
            <person name="Iversen P."/>
            <person name="Mil-Homens D."/>
            <person name="Rocha E.P."/>
            <person name="Fialho A.M."/>
            <person name="Baldwin A."/>
            <person name="Dowson C."/>
            <person name="Barrell B.G."/>
            <person name="Govan J.R."/>
            <person name="Vandamme P."/>
            <person name="Hart C.A."/>
            <person name="Mahenthiralingam E."/>
            <person name="Parkhill J."/>
        </authorList>
    </citation>
    <scope>NUCLEOTIDE SEQUENCE [LARGE SCALE GENOMIC DNA]</scope>
    <source>
        <strain>ATCC BAA-245 / DSM 16553 / LMG 16656 / NCTC 13227 / J2315 / CF5610</strain>
    </source>
</reference>
<proteinExistence type="inferred from homology"/>
<gene>
    <name evidence="1" type="primary">argS</name>
    <name type="ordered locus">BceJ2315_06730</name>
    <name type="ORF">BCAL0679</name>
</gene>
<dbReference type="EC" id="6.1.1.19" evidence="1"/>
<dbReference type="EMBL" id="AM747720">
    <property type="protein sequence ID" value="CAR50988.1"/>
    <property type="molecule type" value="Genomic_DNA"/>
</dbReference>
<dbReference type="RefSeq" id="WP_006489096.1">
    <property type="nucleotide sequence ID" value="NC_011000.1"/>
</dbReference>
<dbReference type="SMR" id="B4E9M9"/>
<dbReference type="KEGG" id="bcj:BCAL0679"/>
<dbReference type="eggNOG" id="COG0018">
    <property type="taxonomic scope" value="Bacteria"/>
</dbReference>
<dbReference type="HOGENOM" id="CLU_006406_0_1_4"/>
<dbReference type="BioCyc" id="BCEN216591:G1G1V-768-MONOMER"/>
<dbReference type="Proteomes" id="UP000001035">
    <property type="component" value="Chromosome 1"/>
</dbReference>
<dbReference type="GO" id="GO:0005737">
    <property type="term" value="C:cytoplasm"/>
    <property type="evidence" value="ECO:0007669"/>
    <property type="project" value="UniProtKB-SubCell"/>
</dbReference>
<dbReference type="GO" id="GO:0004814">
    <property type="term" value="F:arginine-tRNA ligase activity"/>
    <property type="evidence" value="ECO:0007669"/>
    <property type="project" value="UniProtKB-UniRule"/>
</dbReference>
<dbReference type="GO" id="GO:0005524">
    <property type="term" value="F:ATP binding"/>
    <property type="evidence" value="ECO:0007669"/>
    <property type="project" value="UniProtKB-UniRule"/>
</dbReference>
<dbReference type="GO" id="GO:0006420">
    <property type="term" value="P:arginyl-tRNA aminoacylation"/>
    <property type="evidence" value="ECO:0007669"/>
    <property type="project" value="UniProtKB-UniRule"/>
</dbReference>
<dbReference type="CDD" id="cd00671">
    <property type="entry name" value="ArgRS_core"/>
    <property type="match status" value="1"/>
</dbReference>
<dbReference type="FunFam" id="1.10.730.10:FF:000008">
    <property type="entry name" value="Arginine--tRNA ligase"/>
    <property type="match status" value="1"/>
</dbReference>
<dbReference type="FunFam" id="3.40.50.620:FF:000062">
    <property type="entry name" value="Arginine--tRNA ligase"/>
    <property type="match status" value="1"/>
</dbReference>
<dbReference type="Gene3D" id="3.30.1360.70">
    <property type="entry name" value="Arginyl tRNA synthetase N-terminal domain"/>
    <property type="match status" value="1"/>
</dbReference>
<dbReference type="Gene3D" id="3.40.50.620">
    <property type="entry name" value="HUPs"/>
    <property type="match status" value="1"/>
</dbReference>
<dbReference type="Gene3D" id="1.10.730.10">
    <property type="entry name" value="Isoleucyl-tRNA Synthetase, Domain 1"/>
    <property type="match status" value="1"/>
</dbReference>
<dbReference type="HAMAP" id="MF_00123">
    <property type="entry name" value="Arg_tRNA_synth"/>
    <property type="match status" value="1"/>
</dbReference>
<dbReference type="InterPro" id="IPR001412">
    <property type="entry name" value="aa-tRNA-synth_I_CS"/>
</dbReference>
<dbReference type="InterPro" id="IPR001278">
    <property type="entry name" value="Arg-tRNA-ligase"/>
</dbReference>
<dbReference type="InterPro" id="IPR005148">
    <property type="entry name" value="Arg-tRNA-synth_N"/>
</dbReference>
<dbReference type="InterPro" id="IPR036695">
    <property type="entry name" value="Arg-tRNA-synth_N_sf"/>
</dbReference>
<dbReference type="InterPro" id="IPR035684">
    <property type="entry name" value="ArgRS_core"/>
</dbReference>
<dbReference type="InterPro" id="IPR008909">
    <property type="entry name" value="DALR_anticod-bd"/>
</dbReference>
<dbReference type="InterPro" id="IPR014729">
    <property type="entry name" value="Rossmann-like_a/b/a_fold"/>
</dbReference>
<dbReference type="InterPro" id="IPR009080">
    <property type="entry name" value="tRNAsynth_Ia_anticodon-bd"/>
</dbReference>
<dbReference type="NCBIfam" id="TIGR00456">
    <property type="entry name" value="argS"/>
    <property type="match status" value="1"/>
</dbReference>
<dbReference type="PANTHER" id="PTHR11956:SF5">
    <property type="entry name" value="ARGININE--TRNA LIGASE, CYTOPLASMIC"/>
    <property type="match status" value="1"/>
</dbReference>
<dbReference type="PANTHER" id="PTHR11956">
    <property type="entry name" value="ARGINYL-TRNA SYNTHETASE"/>
    <property type="match status" value="1"/>
</dbReference>
<dbReference type="Pfam" id="PF03485">
    <property type="entry name" value="Arg_tRNA_synt_N"/>
    <property type="match status" value="1"/>
</dbReference>
<dbReference type="Pfam" id="PF05746">
    <property type="entry name" value="DALR_1"/>
    <property type="match status" value="1"/>
</dbReference>
<dbReference type="Pfam" id="PF00750">
    <property type="entry name" value="tRNA-synt_1d"/>
    <property type="match status" value="1"/>
</dbReference>
<dbReference type="PRINTS" id="PR01038">
    <property type="entry name" value="TRNASYNTHARG"/>
</dbReference>
<dbReference type="SMART" id="SM01016">
    <property type="entry name" value="Arg_tRNA_synt_N"/>
    <property type="match status" value="1"/>
</dbReference>
<dbReference type="SMART" id="SM00836">
    <property type="entry name" value="DALR_1"/>
    <property type="match status" value="1"/>
</dbReference>
<dbReference type="SUPFAM" id="SSF47323">
    <property type="entry name" value="Anticodon-binding domain of a subclass of class I aminoacyl-tRNA synthetases"/>
    <property type="match status" value="1"/>
</dbReference>
<dbReference type="SUPFAM" id="SSF55190">
    <property type="entry name" value="Arginyl-tRNA synthetase (ArgRS), N-terminal 'additional' domain"/>
    <property type="match status" value="1"/>
</dbReference>
<dbReference type="SUPFAM" id="SSF52374">
    <property type="entry name" value="Nucleotidylyl transferase"/>
    <property type="match status" value="1"/>
</dbReference>
<dbReference type="PROSITE" id="PS00178">
    <property type="entry name" value="AA_TRNA_LIGASE_I"/>
    <property type="match status" value="1"/>
</dbReference>
<sequence length="593" mass="64232">MLPAHKQTLEALLADSVKQVAHALKGADAAFVAPAITLERPKVAAHGDVACNVAMQLAKPLGTNPRQLAEQIVAALTAQPAAQGLVEAAEIAGPGFINLRLSAAAKQAVIAAVFDQGRAFGTSDREKGKQVLLEFVSANPTGPLHVGHGRQAALGDVLANVIASQGYAVHREFYYNDAGVQIGNLAISTQARARGLKPGDAGWPEAAYNGEYIADIARDYLNGETVAASDGEPVKGTGDVEDLDAIRKFAVTYLRREQDMDLQAFGVKFDQYYLESSLYSEGRVEKTVDALVKAGMTYEQDGALWLRTTDEGDDKDRVMRKSDGTYTYFVPDVAYHVTKWERGFTKVINIQGSDHHGTIARVRAGLQGLHIGIPKGYPDYVLHKMVTVMRDGQEVKISKRAGSYVTVRDLIEWSGGAAAGQEAAPDLIDEATITRGRDAVRFFLISRKADTEFVFDIDLALKQNDENPVYYVQYAHARICSVLNELKSRYNVDVAQLPGADLSQLTSAQATSLMQKLAEYPDMLTHAANELAPHAVAFYLRDLAGEFHSFYNAERVLVDDAAPRNARAALLAATRQVLENGLAMLGVSAPAKM</sequence>